<name>MIAB_PSEP7</name>
<protein>
    <recommendedName>
        <fullName evidence="1">tRNA-2-methylthio-N(6)-dimethylallyladenosine synthase</fullName>
        <ecNumber evidence="1">2.8.4.3</ecNumber>
    </recommendedName>
    <alternativeName>
        <fullName evidence="1">(Dimethylallyl)adenosine tRNA methylthiotransferase MiaB</fullName>
    </alternativeName>
    <alternativeName>
        <fullName evidence="1">tRNA-i(6)A37 methylthiotransferase</fullName>
    </alternativeName>
</protein>
<organism>
    <name type="scientific">Pseudomonas paraeruginosa (strain DSM 24068 / PA7)</name>
    <name type="common">Pseudomonas aeruginosa (strain PA7)</name>
    <dbReference type="NCBI Taxonomy" id="381754"/>
    <lineage>
        <taxon>Bacteria</taxon>
        <taxon>Pseudomonadati</taxon>
        <taxon>Pseudomonadota</taxon>
        <taxon>Gammaproteobacteria</taxon>
        <taxon>Pseudomonadales</taxon>
        <taxon>Pseudomonadaceae</taxon>
        <taxon>Pseudomonas</taxon>
        <taxon>Pseudomonas paraeruginosa</taxon>
    </lineage>
</organism>
<feature type="chain" id="PRO_0000374462" description="tRNA-2-methylthio-N(6)-dimethylallyladenosine synthase">
    <location>
        <begin position="1"/>
        <end position="446"/>
    </location>
</feature>
<feature type="domain" description="MTTase N-terminal" evidence="1">
    <location>
        <begin position="3"/>
        <end position="120"/>
    </location>
</feature>
<feature type="domain" description="Radical SAM core" evidence="2">
    <location>
        <begin position="143"/>
        <end position="375"/>
    </location>
</feature>
<feature type="domain" description="TRAM" evidence="1">
    <location>
        <begin position="378"/>
        <end position="442"/>
    </location>
</feature>
<feature type="binding site" evidence="1">
    <location>
        <position position="12"/>
    </location>
    <ligand>
        <name>[4Fe-4S] cluster</name>
        <dbReference type="ChEBI" id="CHEBI:49883"/>
        <label>1</label>
    </ligand>
</feature>
<feature type="binding site" evidence="1">
    <location>
        <position position="49"/>
    </location>
    <ligand>
        <name>[4Fe-4S] cluster</name>
        <dbReference type="ChEBI" id="CHEBI:49883"/>
        <label>1</label>
    </ligand>
</feature>
<feature type="binding site" evidence="1">
    <location>
        <position position="83"/>
    </location>
    <ligand>
        <name>[4Fe-4S] cluster</name>
        <dbReference type="ChEBI" id="CHEBI:49883"/>
        <label>1</label>
    </ligand>
</feature>
<feature type="binding site" evidence="1">
    <location>
        <position position="157"/>
    </location>
    <ligand>
        <name>[4Fe-4S] cluster</name>
        <dbReference type="ChEBI" id="CHEBI:49883"/>
        <label>2</label>
        <note>4Fe-4S-S-AdoMet</note>
    </ligand>
</feature>
<feature type="binding site" evidence="1">
    <location>
        <position position="161"/>
    </location>
    <ligand>
        <name>[4Fe-4S] cluster</name>
        <dbReference type="ChEBI" id="CHEBI:49883"/>
        <label>2</label>
        <note>4Fe-4S-S-AdoMet</note>
    </ligand>
</feature>
<feature type="binding site" evidence="1">
    <location>
        <position position="164"/>
    </location>
    <ligand>
        <name>[4Fe-4S] cluster</name>
        <dbReference type="ChEBI" id="CHEBI:49883"/>
        <label>2</label>
        <note>4Fe-4S-S-AdoMet</note>
    </ligand>
</feature>
<accession>A6V0C9</accession>
<reference key="1">
    <citation type="submission" date="2007-06" db="EMBL/GenBank/DDBJ databases">
        <authorList>
            <person name="Dodson R.J."/>
            <person name="Harkins D."/>
            <person name="Paulsen I.T."/>
        </authorList>
    </citation>
    <scope>NUCLEOTIDE SEQUENCE [LARGE SCALE GENOMIC DNA]</scope>
    <source>
        <strain>DSM 24068 / PA7</strain>
    </source>
</reference>
<dbReference type="EC" id="2.8.4.3" evidence="1"/>
<dbReference type="EMBL" id="CP000744">
    <property type="protein sequence ID" value="ABR81982.1"/>
    <property type="molecule type" value="Genomic_DNA"/>
</dbReference>
<dbReference type="RefSeq" id="WP_012074439.1">
    <property type="nucleotide sequence ID" value="NC_009656.1"/>
</dbReference>
<dbReference type="SMR" id="A6V0C9"/>
<dbReference type="KEGG" id="pap:PSPA7_1128"/>
<dbReference type="HOGENOM" id="CLU_018697_2_0_6"/>
<dbReference type="Proteomes" id="UP000001582">
    <property type="component" value="Chromosome"/>
</dbReference>
<dbReference type="GO" id="GO:0005829">
    <property type="term" value="C:cytosol"/>
    <property type="evidence" value="ECO:0007669"/>
    <property type="project" value="TreeGrafter"/>
</dbReference>
<dbReference type="GO" id="GO:0051539">
    <property type="term" value="F:4 iron, 4 sulfur cluster binding"/>
    <property type="evidence" value="ECO:0007669"/>
    <property type="project" value="UniProtKB-UniRule"/>
</dbReference>
<dbReference type="GO" id="GO:0046872">
    <property type="term" value="F:metal ion binding"/>
    <property type="evidence" value="ECO:0007669"/>
    <property type="project" value="UniProtKB-KW"/>
</dbReference>
<dbReference type="GO" id="GO:0035597">
    <property type="term" value="F:N6-isopentenyladenosine methylthiotransferase activity"/>
    <property type="evidence" value="ECO:0007669"/>
    <property type="project" value="TreeGrafter"/>
</dbReference>
<dbReference type="CDD" id="cd01335">
    <property type="entry name" value="Radical_SAM"/>
    <property type="match status" value="1"/>
</dbReference>
<dbReference type="FunFam" id="3.40.50.12160:FF:000001">
    <property type="entry name" value="tRNA-2-methylthio-N(6)-dimethylallyladenosine synthase"/>
    <property type="match status" value="1"/>
</dbReference>
<dbReference type="FunFam" id="3.80.30.20:FF:000001">
    <property type="entry name" value="tRNA-2-methylthio-N(6)-dimethylallyladenosine synthase 2"/>
    <property type="match status" value="1"/>
</dbReference>
<dbReference type="Gene3D" id="3.40.50.12160">
    <property type="entry name" value="Methylthiotransferase, N-terminal domain"/>
    <property type="match status" value="1"/>
</dbReference>
<dbReference type="Gene3D" id="3.80.30.20">
    <property type="entry name" value="tm_1862 like domain"/>
    <property type="match status" value="1"/>
</dbReference>
<dbReference type="HAMAP" id="MF_01864">
    <property type="entry name" value="tRNA_metthiotr_MiaB"/>
    <property type="match status" value="1"/>
</dbReference>
<dbReference type="InterPro" id="IPR006638">
    <property type="entry name" value="Elp3/MiaA/NifB-like_rSAM"/>
</dbReference>
<dbReference type="InterPro" id="IPR005839">
    <property type="entry name" value="Methylthiotransferase"/>
</dbReference>
<dbReference type="InterPro" id="IPR020612">
    <property type="entry name" value="Methylthiotransferase_CS"/>
</dbReference>
<dbReference type="InterPro" id="IPR013848">
    <property type="entry name" value="Methylthiotransferase_N"/>
</dbReference>
<dbReference type="InterPro" id="IPR038135">
    <property type="entry name" value="Methylthiotransferase_N_sf"/>
</dbReference>
<dbReference type="InterPro" id="IPR006463">
    <property type="entry name" value="MiaB_methiolase"/>
</dbReference>
<dbReference type="InterPro" id="IPR007197">
    <property type="entry name" value="rSAM"/>
</dbReference>
<dbReference type="InterPro" id="IPR023404">
    <property type="entry name" value="rSAM_horseshoe"/>
</dbReference>
<dbReference type="InterPro" id="IPR002792">
    <property type="entry name" value="TRAM_dom"/>
</dbReference>
<dbReference type="NCBIfam" id="TIGR01574">
    <property type="entry name" value="miaB-methiolase"/>
    <property type="match status" value="1"/>
</dbReference>
<dbReference type="NCBIfam" id="TIGR00089">
    <property type="entry name" value="MiaB/RimO family radical SAM methylthiotransferase"/>
    <property type="match status" value="1"/>
</dbReference>
<dbReference type="PANTHER" id="PTHR43020">
    <property type="entry name" value="CDK5 REGULATORY SUBUNIT-ASSOCIATED PROTEIN 1"/>
    <property type="match status" value="1"/>
</dbReference>
<dbReference type="PANTHER" id="PTHR43020:SF2">
    <property type="entry name" value="MITOCHONDRIAL TRNA METHYLTHIOTRANSFERASE CDK5RAP1"/>
    <property type="match status" value="1"/>
</dbReference>
<dbReference type="Pfam" id="PF04055">
    <property type="entry name" value="Radical_SAM"/>
    <property type="match status" value="1"/>
</dbReference>
<dbReference type="Pfam" id="PF01938">
    <property type="entry name" value="TRAM"/>
    <property type="match status" value="1"/>
</dbReference>
<dbReference type="Pfam" id="PF00919">
    <property type="entry name" value="UPF0004"/>
    <property type="match status" value="1"/>
</dbReference>
<dbReference type="SFLD" id="SFLDF00273">
    <property type="entry name" value="(dimethylallyl)adenosine_tRNA"/>
    <property type="match status" value="1"/>
</dbReference>
<dbReference type="SFLD" id="SFLDG01082">
    <property type="entry name" value="B12-binding_domain_containing"/>
    <property type="match status" value="1"/>
</dbReference>
<dbReference type="SFLD" id="SFLDS00029">
    <property type="entry name" value="Radical_SAM"/>
    <property type="match status" value="1"/>
</dbReference>
<dbReference type="SMART" id="SM00729">
    <property type="entry name" value="Elp3"/>
    <property type="match status" value="1"/>
</dbReference>
<dbReference type="SUPFAM" id="SSF102114">
    <property type="entry name" value="Radical SAM enzymes"/>
    <property type="match status" value="1"/>
</dbReference>
<dbReference type="PROSITE" id="PS51449">
    <property type="entry name" value="MTTASE_N"/>
    <property type="match status" value="1"/>
</dbReference>
<dbReference type="PROSITE" id="PS01278">
    <property type="entry name" value="MTTASE_RADICAL"/>
    <property type="match status" value="1"/>
</dbReference>
<dbReference type="PROSITE" id="PS51918">
    <property type="entry name" value="RADICAL_SAM"/>
    <property type="match status" value="1"/>
</dbReference>
<dbReference type="PROSITE" id="PS50926">
    <property type="entry name" value="TRAM"/>
    <property type="match status" value="1"/>
</dbReference>
<proteinExistence type="inferred from homology"/>
<comment type="function">
    <text evidence="1">Catalyzes the methylthiolation of N6-(dimethylallyl)adenosine (i(6)A), leading to the formation of 2-methylthio-N6-(dimethylallyl)adenosine (ms(2)i(6)A) at position 37 in tRNAs that read codons beginning with uridine.</text>
</comment>
<comment type="catalytic activity">
    <reaction evidence="1">
        <text>N(6)-dimethylallyladenosine(37) in tRNA + (sulfur carrier)-SH + AH2 + 2 S-adenosyl-L-methionine = 2-methylsulfanyl-N(6)-dimethylallyladenosine(37) in tRNA + (sulfur carrier)-H + 5'-deoxyadenosine + L-methionine + A + S-adenosyl-L-homocysteine + 2 H(+)</text>
        <dbReference type="Rhea" id="RHEA:37067"/>
        <dbReference type="Rhea" id="RHEA-COMP:10375"/>
        <dbReference type="Rhea" id="RHEA-COMP:10376"/>
        <dbReference type="Rhea" id="RHEA-COMP:14737"/>
        <dbReference type="Rhea" id="RHEA-COMP:14739"/>
        <dbReference type="ChEBI" id="CHEBI:13193"/>
        <dbReference type="ChEBI" id="CHEBI:15378"/>
        <dbReference type="ChEBI" id="CHEBI:17319"/>
        <dbReference type="ChEBI" id="CHEBI:17499"/>
        <dbReference type="ChEBI" id="CHEBI:29917"/>
        <dbReference type="ChEBI" id="CHEBI:57844"/>
        <dbReference type="ChEBI" id="CHEBI:57856"/>
        <dbReference type="ChEBI" id="CHEBI:59789"/>
        <dbReference type="ChEBI" id="CHEBI:64428"/>
        <dbReference type="ChEBI" id="CHEBI:74415"/>
        <dbReference type="ChEBI" id="CHEBI:74417"/>
        <dbReference type="EC" id="2.8.4.3"/>
    </reaction>
</comment>
<comment type="cofactor">
    <cofactor evidence="1">
        <name>[4Fe-4S] cluster</name>
        <dbReference type="ChEBI" id="CHEBI:49883"/>
    </cofactor>
    <text evidence="1">Binds 2 [4Fe-4S] clusters. One cluster is coordinated with 3 cysteines and an exchangeable S-adenosyl-L-methionine.</text>
</comment>
<comment type="subunit">
    <text evidence="1">Monomer.</text>
</comment>
<comment type="subcellular location">
    <subcellularLocation>
        <location evidence="1">Cytoplasm</location>
    </subcellularLocation>
</comment>
<comment type="similarity">
    <text evidence="1">Belongs to the methylthiotransferase family. MiaB subfamily.</text>
</comment>
<gene>
    <name evidence="1" type="primary">miaB</name>
    <name type="ordered locus">PSPA7_1128</name>
</gene>
<evidence type="ECO:0000255" key="1">
    <source>
        <dbReference type="HAMAP-Rule" id="MF_01864"/>
    </source>
</evidence>
<evidence type="ECO:0000255" key="2">
    <source>
        <dbReference type="PROSITE-ProRule" id="PRU01266"/>
    </source>
</evidence>
<keyword id="KW-0004">4Fe-4S</keyword>
<keyword id="KW-0963">Cytoplasm</keyword>
<keyword id="KW-0408">Iron</keyword>
<keyword id="KW-0411">Iron-sulfur</keyword>
<keyword id="KW-0479">Metal-binding</keyword>
<keyword id="KW-0949">S-adenosyl-L-methionine</keyword>
<keyword id="KW-0808">Transferase</keyword>
<keyword id="KW-0819">tRNA processing</keyword>
<sequence length="446" mass="49975">MAKKLFIETHGCQMNEYDSSRMADLLGEHQALEVTENAAEADVILLNTCSIREKAQEKVFSKLGMWRDLKQQNPDLVIGVGGCVASQEGAAIRERAPYVDVVFGPQTLHRLPEMIDAARSTRKPQVDVSFPEIEKFDRLPEPRVDGPTAFVSVMEGCSKYCSFCVVPYTRGEEVSRPFDDVIAEVIHLAENGVREVTLLGQNVNGFRGQTHDGRLADFAELLRVVAAVDGIERIRYTTSHPLEFSDALIQAHAEVPELVKFIHLPVQSGSDRVLAAMKRNHTVLEYKSRIRKLKAAVPDICISSDFIVGFPGETEKDFEQTMKLVEEVGFDFSFSFIYSARPGTPAADLADDLPEEVKKRRLQILQGRIHQQGYEISRRMVGSTQRILVTDFSKKDPGMLQGRTENNRIVNFRCDNPRLIGQFAQVHIDDALPHSLRGTLIEGTLH</sequence>